<keyword id="KW-1185">Reference proteome</keyword>
<keyword id="KW-0687">Ribonucleoprotein</keyword>
<keyword id="KW-0689">Ribosomal protein</keyword>
<keyword id="KW-0694">RNA-binding</keyword>
<keyword id="KW-0699">rRNA-binding</keyword>
<dbReference type="EMBL" id="CP000414">
    <property type="protein sequence ID" value="ABJ61330.1"/>
    <property type="molecule type" value="Genomic_DNA"/>
</dbReference>
<dbReference type="RefSeq" id="WP_002816035.1">
    <property type="nucleotide sequence ID" value="NC_008531.1"/>
</dbReference>
<dbReference type="SMR" id="Q03ZP2"/>
<dbReference type="EnsemblBacteria" id="ABJ61330">
    <property type="protein sequence ID" value="ABJ61330"/>
    <property type="gene ID" value="LEUM_0199"/>
</dbReference>
<dbReference type="GeneID" id="97504978"/>
<dbReference type="KEGG" id="lme:LEUM_0199"/>
<dbReference type="eggNOG" id="COG0090">
    <property type="taxonomic scope" value="Bacteria"/>
</dbReference>
<dbReference type="HOGENOM" id="CLU_036235_2_1_9"/>
<dbReference type="Proteomes" id="UP000000362">
    <property type="component" value="Chromosome"/>
</dbReference>
<dbReference type="GO" id="GO:0015934">
    <property type="term" value="C:large ribosomal subunit"/>
    <property type="evidence" value="ECO:0007669"/>
    <property type="project" value="InterPro"/>
</dbReference>
<dbReference type="GO" id="GO:0019843">
    <property type="term" value="F:rRNA binding"/>
    <property type="evidence" value="ECO:0007669"/>
    <property type="project" value="UniProtKB-UniRule"/>
</dbReference>
<dbReference type="GO" id="GO:0003735">
    <property type="term" value="F:structural constituent of ribosome"/>
    <property type="evidence" value="ECO:0007669"/>
    <property type="project" value="InterPro"/>
</dbReference>
<dbReference type="GO" id="GO:0016740">
    <property type="term" value="F:transferase activity"/>
    <property type="evidence" value="ECO:0007669"/>
    <property type="project" value="InterPro"/>
</dbReference>
<dbReference type="GO" id="GO:0002181">
    <property type="term" value="P:cytoplasmic translation"/>
    <property type="evidence" value="ECO:0007669"/>
    <property type="project" value="TreeGrafter"/>
</dbReference>
<dbReference type="FunFam" id="2.30.30.30:FF:000001">
    <property type="entry name" value="50S ribosomal protein L2"/>
    <property type="match status" value="1"/>
</dbReference>
<dbReference type="FunFam" id="2.40.50.140:FF:000003">
    <property type="entry name" value="50S ribosomal protein L2"/>
    <property type="match status" value="1"/>
</dbReference>
<dbReference type="FunFam" id="4.10.950.10:FF:000001">
    <property type="entry name" value="50S ribosomal protein L2"/>
    <property type="match status" value="1"/>
</dbReference>
<dbReference type="Gene3D" id="2.30.30.30">
    <property type="match status" value="1"/>
</dbReference>
<dbReference type="Gene3D" id="2.40.50.140">
    <property type="entry name" value="Nucleic acid-binding proteins"/>
    <property type="match status" value="1"/>
</dbReference>
<dbReference type="Gene3D" id="4.10.950.10">
    <property type="entry name" value="Ribosomal protein L2, domain 3"/>
    <property type="match status" value="1"/>
</dbReference>
<dbReference type="HAMAP" id="MF_01320_B">
    <property type="entry name" value="Ribosomal_uL2_B"/>
    <property type="match status" value="1"/>
</dbReference>
<dbReference type="InterPro" id="IPR012340">
    <property type="entry name" value="NA-bd_OB-fold"/>
</dbReference>
<dbReference type="InterPro" id="IPR014722">
    <property type="entry name" value="Rib_uL2_dom2"/>
</dbReference>
<dbReference type="InterPro" id="IPR002171">
    <property type="entry name" value="Ribosomal_uL2"/>
</dbReference>
<dbReference type="InterPro" id="IPR005880">
    <property type="entry name" value="Ribosomal_uL2_bac/org-type"/>
</dbReference>
<dbReference type="InterPro" id="IPR022669">
    <property type="entry name" value="Ribosomal_uL2_C"/>
</dbReference>
<dbReference type="InterPro" id="IPR022671">
    <property type="entry name" value="Ribosomal_uL2_CS"/>
</dbReference>
<dbReference type="InterPro" id="IPR014726">
    <property type="entry name" value="Ribosomal_uL2_dom3"/>
</dbReference>
<dbReference type="InterPro" id="IPR022666">
    <property type="entry name" value="Ribosomal_uL2_RNA-bd_dom"/>
</dbReference>
<dbReference type="InterPro" id="IPR008991">
    <property type="entry name" value="Translation_prot_SH3-like_sf"/>
</dbReference>
<dbReference type="NCBIfam" id="TIGR01171">
    <property type="entry name" value="rplB_bact"/>
    <property type="match status" value="1"/>
</dbReference>
<dbReference type="PANTHER" id="PTHR13691:SF5">
    <property type="entry name" value="LARGE RIBOSOMAL SUBUNIT PROTEIN UL2M"/>
    <property type="match status" value="1"/>
</dbReference>
<dbReference type="PANTHER" id="PTHR13691">
    <property type="entry name" value="RIBOSOMAL PROTEIN L2"/>
    <property type="match status" value="1"/>
</dbReference>
<dbReference type="Pfam" id="PF00181">
    <property type="entry name" value="Ribosomal_L2"/>
    <property type="match status" value="1"/>
</dbReference>
<dbReference type="Pfam" id="PF03947">
    <property type="entry name" value="Ribosomal_L2_C"/>
    <property type="match status" value="1"/>
</dbReference>
<dbReference type="PIRSF" id="PIRSF002158">
    <property type="entry name" value="Ribosomal_L2"/>
    <property type="match status" value="1"/>
</dbReference>
<dbReference type="SMART" id="SM01383">
    <property type="entry name" value="Ribosomal_L2"/>
    <property type="match status" value="1"/>
</dbReference>
<dbReference type="SMART" id="SM01382">
    <property type="entry name" value="Ribosomal_L2_C"/>
    <property type="match status" value="1"/>
</dbReference>
<dbReference type="SUPFAM" id="SSF50249">
    <property type="entry name" value="Nucleic acid-binding proteins"/>
    <property type="match status" value="1"/>
</dbReference>
<dbReference type="SUPFAM" id="SSF50104">
    <property type="entry name" value="Translation proteins SH3-like domain"/>
    <property type="match status" value="1"/>
</dbReference>
<dbReference type="PROSITE" id="PS00467">
    <property type="entry name" value="RIBOSOMAL_L2"/>
    <property type="match status" value="1"/>
</dbReference>
<comment type="function">
    <text evidence="1">One of the primary rRNA binding proteins. Required for association of the 30S and 50S subunits to form the 70S ribosome, for tRNA binding and peptide bond formation. It has been suggested to have peptidyltransferase activity; this is somewhat controversial. Makes several contacts with the 16S rRNA in the 70S ribosome.</text>
</comment>
<comment type="subunit">
    <text evidence="1">Part of the 50S ribosomal subunit. Forms a bridge to the 30S subunit in the 70S ribosome.</text>
</comment>
<comment type="similarity">
    <text evidence="1">Belongs to the universal ribosomal protein uL2 family.</text>
</comment>
<evidence type="ECO:0000255" key="1">
    <source>
        <dbReference type="HAMAP-Rule" id="MF_01320"/>
    </source>
</evidence>
<evidence type="ECO:0000256" key="2">
    <source>
        <dbReference type="SAM" id="MobiDB-lite"/>
    </source>
</evidence>
<evidence type="ECO:0000305" key="3"/>
<proteinExistence type="inferred from homology"/>
<feature type="chain" id="PRO_0000309948" description="Large ribosomal subunit protein uL2">
    <location>
        <begin position="1"/>
        <end position="277"/>
    </location>
</feature>
<feature type="region of interest" description="Disordered" evidence="2">
    <location>
        <begin position="212"/>
        <end position="277"/>
    </location>
</feature>
<feature type="compositionally biased region" description="Basic residues" evidence="2">
    <location>
        <begin position="254"/>
        <end position="277"/>
    </location>
</feature>
<sequence>MAIKSYKPTSAGRRNMTTSDFAEITKTTPEKSLLAKKSKTGARNASGRMTVRHHAGGHKQAYRIVDFKRTKDDKTATVKAIEYDPNRTANIALLVYEDGIKSYILAPKGLKVGDKVQSGPDADIKPGNALPLSAIPEGTLIHNIELKPGKGGQLARSAGASAQILGRDGKYIIVRLTSGEVRLVLATNRATIGEVGNAEHSLINWGKAGRNRWRGKRPHVRGSVMNPNDHPHGGGEGKAPVGRPSPMSPWGKKTAGKKTRDKKKASTKFIVRGRKSK</sequence>
<accession>Q03ZP2</accession>
<gene>
    <name evidence="1" type="primary">rplB</name>
    <name type="ordered locus">LEUM_0199</name>
</gene>
<reference key="1">
    <citation type="journal article" date="2006" name="Proc. Natl. Acad. Sci. U.S.A.">
        <title>Comparative genomics of the lactic acid bacteria.</title>
        <authorList>
            <person name="Makarova K.S."/>
            <person name="Slesarev A."/>
            <person name="Wolf Y.I."/>
            <person name="Sorokin A."/>
            <person name="Mirkin B."/>
            <person name="Koonin E.V."/>
            <person name="Pavlov A."/>
            <person name="Pavlova N."/>
            <person name="Karamychev V."/>
            <person name="Polouchine N."/>
            <person name="Shakhova V."/>
            <person name="Grigoriev I."/>
            <person name="Lou Y."/>
            <person name="Rohksar D."/>
            <person name="Lucas S."/>
            <person name="Huang K."/>
            <person name="Goodstein D.M."/>
            <person name="Hawkins T."/>
            <person name="Plengvidhya V."/>
            <person name="Welker D."/>
            <person name="Hughes J."/>
            <person name="Goh Y."/>
            <person name="Benson A."/>
            <person name="Baldwin K."/>
            <person name="Lee J.-H."/>
            <person name="Diaz-Muniz I."/>
            <person name="Dosti B."/>
            <person name="Smeianov V."/>
            <person name="Wechter W."/>
            <person name="Barabote R."/>
            <person name="Lorca G."/>
            <person name="Altermann E."/>
            <person name="Barrangou R."/>
            <person name="Ganesan B."/>
            <person name="Xie Y."/>
            <person name="Rawsthorne H."/>
            <person name="Tamir D."/>
            <person name="Parker C."/>
            <person name="Breidt F."/>
            <person name="Broadbent J.R."/>
            <person name="Hutkins R."/>
            <person name="O'Sullivan D."/>
            <person name="Steele J."/>
            <person name="Unlu G."/>
            <person name="Saier M.H. Jr."/>
            <person name="Klaenhammer T."/>
            <person name="Richardson P."/>
            <person name="Kozyavkin S."/>
            <person name="Weimer B.C."/>
            <person name="Mills D.A."/>
        </authorList>
    </citation>
    <scope>NUCLEOTIDE SEQUENCE [LARGE SCALE GENOMIC DNA]</scope>
    <source>
        <strain>ATCC 8293 / DSM 20343 / BCRC 11652 / CCM 1803 / JCM 6124 / NCDO 523 / NBRC 100496 / NCIMB 8023 / NCTC 12954 / NRRL B-1118 / 37Y</strain>
    </source>
</reference>
<protein>
    <recommendedName>
        <fullName evidence="1">Large ribosomal subunit protein uL2</fullName>
    </recommendedName>
    <alternativeName>
        <fullName evidence="3">50S ribosomal protein L2</fullName>
    </alternativeName>
</protein>
<organism>
    <name type="scientific">Leuconostoc mesenteroides subsp. mesenteroides (strain ATCC 8293 / DSM 20343 / BCRC 11652 / CCM 1803 / JCM 6124 / NCDO 523 / NBRC 100496 / NCIMB 8023 / NCTC 12954 / NRRL B-1118 / 37Y)</name>
    <dbReference type="NCBI Taxonomy" id="203120"/>
    <lineage>
        <taxon>Bacteria</taxon>
        <taxon>Bacillati</taxon>
        <taxon>Bacillota</taxon>
        <taxon>Bacilli</taxon>
        <taxon>Lactobacillales</taxon>
        <taxon>Lactobacillaceae</taxon>
        <taxon>Leuconostoc</taxon>
    </lineage>
</organism>
<name>RL2_LEUMM</name>